<organism>
    <name type="scientific">Staphylococcus aureus (strain JH9)</name>
    <dbReference type="NCBI Taxonomy" id="359786"/>
    <lineage>
        <taxon>Bacteria</taxon>
        <taxon>Bacillati</taxon>
        <taxon>Bacillota</taxon>
        <taxon>Bacilli</taxon>
        <taxon>Bacillales</taxon>
        <taxon>Staphylococcaceae</taxon>
        <taxon>Staphylococcus</taxon>
    </lineage>
</organism>
<feature type="chain" id="PRO_5000247236" description="Na(+)/H(+) antiporter subunit G1">
    <location>
        <begin position="1"/>
        <end position="118"/>
    </location>
</feature>
<feature type="transmembrane region" description="Helical" evidence="2">
    <location>
        <begin position="4"/>
        <end position="24"/>
    </location>
</feature>
<feature type="transmembrane region" description="Helical" evidence="2">
    <location>
        <begin position="38"/>
        <end position="58"/>
    </location>
</feature>
<feature type="transmembrane region" description="Helical" evidence="2">
    <location>
        <begin position="60"/>
        <end position="80"/>
    </location>
</feature>
<name>MNHG1_STAA9</name>
<evidence type="ECO:0000250" key="1"/>
<evidence type="ECO:0000255" key="2"/>
<evidence type="ECO:0000305" key="3"/>
<sequence>MIKIILISLALIFVIIGALISALAAIGLLRLEDVYSRAHAAGKASTLGAMSLLFGTFLYFIATQGFVNMQLIVAIIFVLITGPLSSHMIMKAAYNIKTPYTKKTKVDEISEDLKDTKL</sequence>
<reference key="1">
    <citation type="submission" date="2007-05" db="EMBL/GenBank/DDBJ databases">
        <title>Complete sequence of chromosome of Staphylococcus aureus subsp. aureus JH9.</title>
        <authorList>
            <consortium name="US DOE Joint Genome Institute"/>
            <person name="Copeland A."/>
            <person name="Lucas S."/>
            <person name="Lapidus A."/>
            <person name="Barry K."/>
            <person name="Detter J.C."/>
            <person name="Glavina del Rio T."/>
            <person name="Hammon N."/>
            <person name="Israni S."/>
            <person name="Pitluck S."/>
            <person name="Chain P."/>
            <person name="Malfatti S."/>
            <person name="Shin M."/>
            <person name="Vergez L."/>
            <person name="Schmutz J."/>
            <person name="Larimer F."/>
            <person name="Land M."/>
            <person name="Hauser L."/>
            <person name="Kyrpides N."/>
            <person name="Kim E."/>
            <person name="Tomasz A."/>
            <person name="Richardson P."/>
        </authorList>
    </citation>
    <scope>NUCLEOTIDE SEQUENCE [LARGE SCALE GENOMIC DNA]</scope>
    <source>
        <strain>JH9</strain>
    </source>
</reference>
<protein>
    <recommendedName>
        <fullName>Na(+)/H(+) antiporter subunit G1</fullName>
    </recommendedName>
    <alternativeName>
        <fullName>Mnh complex subunit G1</fullName>
    </alternativeName>
</protein>
<accession>A5IRC4</accession>
<comment type="function">
    <text evidence="1">Mnh complex is a Na(+)/H(+) antiporter involved in Na(+) excretion.</text>
</comment>
<comment type="subunit">
    <text evidence="1">May form a heterooligomeric complex that consists of seven subunits: mnhA1, mnhB1, mnhC1, mnhD1, mnhE1, mnhF1 and mnhG1.</text>
</comment>
<comment type="subcellular location">
    <subcellularLocation>
        <location evidence="3">Cell membrane</location>
        <topology evidence="3">Multi-pass membrane protein</topology>
    </subcellularLocation>
</comment>
<comment type="similarity">
    <text evidence="3">Belongs to the CPA3 antiporters (TC 2.A.63) subunit G family.</text>
</comment>
<dbReference type="EMBL" id="CP000703">
    <property type="protein sequence ID" value="ABQ48747.1"/>
    <property type="molecule type" value="Genomic_DNA"/>
</dbReference>
<dbReference type="RefSeq" id="WP_000590451.1">
    <property type="nucleotide sequence ID" value="NC_009487.1"/>
</dbReference>
<dbReference type="SMR" id="A5IRC4"/>
<dbReference type="GeneID" id="98345267"/>
<dbReference type="KEGG" id="saj:SaurJH9_0946"/>
<dbReference type="HOGENOM" id="CLU_121334_0_3_9"/>
<dbReference type="GO" id="GO:0005886">
    <property type="term" value="C:plasma membrane"/>
    <property type="evidence" value="ECO:0007669"/>
    <property type="project" value="UniProtKB-SubCell"/>
</dbReference>
<dbReference type="GO" id="GO:0015385">
    <property type="term" value="F:sodium:proton antiporter activity"/>
    <property type="evidence" value="ECO:0007669"/>
    <property type="project" value="TreeGrafter"/>
</dbReference>
<dbReference type="InterPro" id="IPR005133">
    <property type="entry name" value="PhaG_MnhG_YufB"/>
</dbReference>
<dbReference type="NCBIfam" id="TIGR01300">
    <property type="entry name" value="CPA3_mnhG_phaG"/>
    <property type="match status" value="1"/>
</dbReference>
<dbReference type="NCBIfam" id="NF009237">
    <property type="entry name" value="PRK12587.1"/>
    <property type="match status" value="1"/>
</dbReference>
<dbReference type="NCBIfam" id="NF009314">
    <property type="entry name" value="PRK12674.1-2"/>
    <property type="match status" value="1"/>
</dbReference>
<dbReference type="PANTHER" id="PTHR34703">
    <property type="entry name" value="ANTIPORTER SUBUNIT MNHG2-RELATED"/>
    <property type="match status" value="1"/>
</dbReference>
<dbReference type="PANTHER" id="PTHR34703:SF1">
    <property type="entry name" value="ANTIPORTER SUBUNIT MNHG2-RELATED"/>
    <property type="match status" value="1"/>
</dbReference>
<dbReference type="Pfam" id="PF03334">
    <property type="entry name" value="PhaG_MnhG_YufB"/>
    <property type="match status" value="1"/>
</dbReference>
<gene>
    <name type="primary">mnhG1</name>
    <name type="ordered locus">SaurJH9_0946</name>
</gene>
<proteinExistence type="inferred from homology"/>
<keyword id="KW-0050">Antiport</keyword>
<keyword id="KW-1003">Cell membrane</keyword>
<keyword id="KW-0375">Hydrogen ion transport</keyword>
<keyword id="KW-0406">Ion transport</keyword>
<keyword id="KW-0472">Membrane</keyword>
<keyword id="KW-0915">Sodium</keyword>
<keyword id="KW-0739">Sodium transport</keyword>
<keyword id="KW-0812">Transmembrane</keyword>
<keyword id="KW-1133">Transmembrane helix</keyword>
<keyword id="KW-0813">Transport</keyword>